<keyword id="KW-0012">Acyltransferase</keyword>
<keyword id="KW-1185">Reference proteome</keyword>
<keyword id="KW-0808">Transferase</keyword>
<organism>
    <name type="scientific">Oceanobacillus iheyensis (strain DSM 14371 / CIP 107618 / JCM 11309 / KCTC 3954 / HTE831)</name>
    <dbReference type="NCBI Taxonomy" id="221109"/>
    <lineage>
        <taxon>Bacteria</taxon>
        <taxon>Bacillati</taxon>
        <taxon>Bacillota</taxon>
        <taxon>Bacilli</taxon>
        <taxon>Bacillales</taxon>
        <taxon>Bacillaceae</taxon>
        <taxon>Oceanobacillus</taxon>
    </lineage>
</organism>
<evidence type="ECO:0000255" key="1">
    <source>
        <dbReference type="HAMAP-Rule" id="MF_02119"/>
    </source>
</evidence>
<evidence type="ECO:0000255" key="2">
    <source>
        <dbReference type="PROSITE-ProRule" id="PRU01067"/>
    </source>
</evidence>
<comment type="function">
    <text evidence="1">Catalyzes the amidotransfer (transamidation) of the octanoyl moiety from octanoyl-GcvH to the lipoyl domain of the E2 subunit of lipoate-dependent enzymes.</text>
</comment>
<comment type="catalytic activity">
    <reaction evidence="1">
        <text>N(6)-octanoyl-L-lysyl-[glycine-cleavage complex H protein] + L-lysyl-[lipoyl-carrier protein] = N(6)-octanoyl-L-lysyl-[lipoyl-carrier protein] + L-lysyl-[glycine-cleavage complex H protein]</text>
        <dbReference type="Rhea" id="RHEA:20213"/>
        <dbReference type="Rhea" id="RHEA-COMP:10500"/>
        <dbReference type="Rhea" id="RHEA-COMP:10501"/>
        <dbReference type="Rhea" id="RHEA-COMP:10503"/>
        <dbReference type="Rhea" id="RHEA-COMP:10504"/>
        <dbReference type="ChEBI" id="CHEBI:29969"/>
        <dbReference type="ChEBI" id="CHEBI:78809"/>
        <dbReference type="EC" id="2.3.1.204"/>
    </reaction>
</comment>
<comment type="pathway">
    <text evidence="1">Protein modification; protein lipoylation via endogenous pathway; protein N(6)-(lipoyl)lysine from octanoyl-[acyl-carrier-protein].</text>
</comment>
<comment type="miscellaneous">
    <text evidence="1">The reaction proceeds via a thioester-linked acyl-enzyme intermediate.</text>
</comment>
<comment type="similarity">
    <text evidence="1">Belongs to the octanoyltransferase LipL family.</text>
</comment>
<feature type="chain" id="PRO_0000410844" description="Octanoyl-[GcvH]:protein N-octanoyltransferase">
    <location>
        <begin position="1"/>
        <end position="279"/>
    </location>
</feature>
<feature type="domain" description="BPL/LPL catalytic" evidence="2">
    <location>
        <begin position="48"/>
        <end position="253"/>
    </location>
</feature>
<feature type="active site" description="Acyl-thioester intermediate" evidence="1">
    <location>
        <position position="152"/>
    </location>
</feature>
<feature type="site" description="Lowers pKa of active site Cys" evidence="1">
    <location>
        <position position="164"/>
    </location>
</feature>
<sequence length="279" mass="31558">MKNWKEIIHHQTFRYIDHSTQTDIEGKPNTALTSFAVDDTLAISVSEETSPPVIRLWVHSKTIVLGIPDSRLPFIDSGMQFIEQNNYQAVVRNSGGLAVALDEGVLNISLIIPGGKNLSIYDCYEAMVRFIQAMFHDLTNDIKAYEIVGSYCPGDYDLSIGGRKFAGISQRRVKNGISVQIYLDVEGNSNQRAEVIREFYNKGKKNMETSFTYPDVDPKVMGSLSELLGVALTVDDVQKRVVHTLEKLSDEIVEIPFQEEEIVNFKKRYKQMVKRNESN</sequence>
<gene>
    <name evidence="1" type="primary">lipL</name>
    <name type="ordered locus">OB3021</name>
</gene>
<protein>
    <recommendedName>
        <fullName evidence="1">Octanoyl-[GcvH]:protein N-octanoyltransferase</fullName>
        <ecNumber evidence="1">2.3.1.204</ecNumber>
    </recommendedName>
    <alternativeName>
        <fullName evidence="1">Octanoyl-[GcvH]:E2 amidotransferase</fullName>
    </alternativeName>
</protein>
<proteinExistence type="inferred from homology"/>
<reference key="1">
    <citation type="journal article" date="2002" name="Nucleic Acids Res.">
        <title>Genome sequence of Oceanobacillus iheyensis isolated from the Iheya Ridge and its unexpected adaptive capabilities to extreme environments.</title>
        <authorList>
            <person name="Takami H."/>
            <person name="Takaki Y."/>
            <person name="Uchiyama I."/>
        </authorList>
    </citation>
    <scope>NUCLEOTIDE SEQUENCE [LARGE SCALE GENOMIC DNA]</scope>
    <source>
        <strain>DSM 14371 / CIP 107618 / JCM 11309 / KCTC 3954 / HTE831</strain>
    </source>
</reference>
<name>LIPL_OCEIH</name>
<dbReference type="EC" id="2.3.1.204" evidence="1"/>
<dbReference type="EMBL" id="BA000028">
    <property type="protein sequence ID" value="BAC14977.1"/>
    <property type="molecule type" value="Genomic_DNA"/>
</dbReference>
<dbReference type="RefSeq" id="WP_011067417.1">
    <property type="nucleotide sequence ID" value="NC_004193.1"/>
</dbReference>
<dbReference type="SMR" id="Q8EM39"/>
<dbReference type="STRING" id="221109.gene:10735273"/>
<dbReference type="KEGG" id="oih:OB3021"/>
<dbReference type="eggNOG" id="COG0095">
    <property type="taxonomic scope" value="Bacteria"/>
</dbReference>
<dbReference type="HOGENOM" id="CLU_067270_0_0_9"/>
<dbReference type="OrthoDB" id="2080934at2"/>
<dbReference type="PhylomeDB" id="Q8EM39"/>
<dbReference type="Proteomes" id="UP000000822">
    <property type="component" value="Chromosome"/>
</dbReference>
<dbReference type="GO" id="GO:0033819">
    <property type="term" value="F:lipoyl(octanoyl) transferase activity"/>
    <property type="evidence" value="ECO:0007669"/>
    <property type="project" value="InterPro"/>
</dbReference>
<dbReference type="GO" id="GO:0009107">
    <property type="term" value="P:lipoate biosynthetic process"/>
    <property type="evidence" value="ECO:0007669"/>
    <property type="project" value="UniProtKB-UniRule"/>
</dbReference>
<dbReference type="GO" id="GO:0036211">
    <property type="term" value="P:protein modification process"/>
    <property type="evidence" value="ECO:0007669"/>
    <property type="project" value="InterPro"/>
</dbReference>
<dbReference type="CDD" id="cd16443">
    <property type="entry name" value="LplA"/>
    <property type="match status" value="1"/>
</dbReference>
<dbReference type="Gene3D" id="3.30.930.10">
    <property type="entry name" value="Bira Bifunctional Protein, Domain 2"/>
    <property type="match status" value="1"/>
</dbReference>
<dbReference type="HAMAP" id="MF_02119">
    <property type="entry name" value="LipL"/>
    <property type="match status" value="1"/>
</dbReference>
<dbReference type="InterPro" id="IPR045864">
    <property type="entry name" value="aa-tRNA-synth_II/BPL/LPL"/>
</dbReference>
<dbReference type="InterPro" id="IPR004143">
    <property type="entry name" value="BPL_LPL_catalytic"/>
</dbReference>
<dbReference type="InterPro" id="IPR024897">
    <property type="entry name" value="LipL"/>
</dbReference>
<dbReference type="InterPro" id="IPR050664">
    <property type="entry name" value="Octanoyltrans_LipM/LipL"/>
</dbReference>
<dbReference type="PANTHER" id="PTHR43679:SF2">
    <property type="entry name" value="OCTANOYL-[GCVH]:PROTEIN N-OCTANOYLTRANSFERASE"/>
    <property type="match status" value="1"/>
</dbReference>
<dbReference type="PANTHER" id="PTHR43679">
    <property type="entry name" value="OCTANOYLTRANSFERASE LIPM-RELATED"/>
    <property type="match status" value="1"/>
</dbReference>
<dbReference type="Pfam" id="PF21948">
    <property type="entry name" value="LplA-B_cat"/>
    <property type="match status" value="1"/>
</dbReference>
<dbReference type="SUPFAM" id="SSF55681">
    <property type="entry name" value="Class II aaRS and biotin synthetases"/>
    <property type="match status" value="1"/>
</dbReference>
<dbReference type="PROSITE" id="PS51733">
    <property type="entry name" value="BPL_LPL_CATALYTIC"/>
    <property type="match status" value="1"/>
</dbReference>
<accession>Q8EM39</accession>